<proteinExistence type="inferred from homology"/>
<gene>
    <name evidence="1" type="primary">speE</name>
    <name type="ordered locus">BcerKBAB4_5164</name>
</gene>
<evidence type="ECO:0000255" key="1">
    <source>
        <dbReference type="HAMAP-Rule" id="MF_00198"/>
    </source>
</evidence>
<accession>A9VSG3</accession>
<comment type="function">
    <text evidence="1">Catalyzes the irreversible transfer of a propylamine group from the amino donor S-adenosylmethioninamine (decarboxy-AdoMet) to putrescine (1,4-diaminobutane) to yield spermidine.</text>
</comment>
<comment type="catalytic activity">
    <reaction evidence="1">
        <text>S-adenosyl 3-(methylsulfanyl)propylamine + putrescine = S-methyl-5'-thioadenosine + spermidine + H(+)</text>
        <dbReference type="Rhea" id="RHEA:12721"/>
        <dbReference type="ChEBI" id="CHEBI:15378"/>
        <dbReference type="ChEBI" id="CHEBI:17509"/>
        <dbReference type="ChEBI" id="CHEBI:57443"/>
        <dbReference type="ChEBI" id="CHEBI:57834"/>
        <dbReference type="ChEBI" id="CHEBI:326268"/>
        <dbReference type="EC" id="2.5.1.16"/>
    </reaction>
</comment>
<comment type="pathway">
    <text evidence="1">Amine and polyamine biosynthesis; spermidine biosynthesis; spermidine from putrescine: step 1/1.</text>
</comment>
<comment type="subunit">
    <text evidence="1">Homodimer or homotetramer.</text>
</comment>
<comment type="subcellular location">
    <subcellularLocation>
        <location evidence="1">Cytoplasm</location>
    </subcellularLocation>
</comment>
<comment type="similarity">
    <text evidence="1">Belongs to the spermidine/spermine synthase family.</text>
</comment>
<sequence>MELWFTEKQTKHFGITARINRTLHTEQTEFQKLDMVETEEFGNMLILDGMVMTTEKDEFVYHEMVAHVPLFTHPNPENVLVVGGGDGGVIREVLKHPSVKKATLVEIDGKVIEYSKQYLPSIAGALDDERVEVKVGDGFLHIAESENEYDVIMVDSTEPVGPAVNLFTKGFYAGISKALKEDGIFVAQTDNPWFTPELITTVFKDVKEIFPITRLYTANIPTYPSGLWTFTIGSKKHDPLEVSEERFHEIETKYYTKELHNAAFALPKFVGDLIK</sequence>
<name>SPEE_BACMK</name>
<organism>
    <name type="scientific">Bacillus mycoides (strain KBAB4)</name>
    <name type="common">Bacillus weihenstephanensis</name>
    <dbReference type="NCBI Taxonomy" id="315730"/>
    <lineage>
        <taxon>Bacteria</taxon>
        <taxon>Bacillati</taxon>
        <taxon>Bacillota</taxon>
        <taxon>Bacilli</taxon>
        <taxon>Bacillales</taxon>
        <taxon>Bacillaceae</taxon>
        <taxon>Bacillus</taxon>
        <taxon>Bacillus cereus group</taxon>
    </lineage>
</organism>
<protein>
    <recommendedName>
        <fullName evidence="1">Polyamine aminopropyltransferase</fullName>
    </recommendedName>
    <alternativeName>
        <fullName evidence="1">Putrescine aminopropyltransferase</fullName>
        <shortName evidence="1">PAPT</shortName>
    </alternativeName>
    <alternativeName>
        <fullName evidence="1">Spermidine synthase</fullName>
        <shortName evidence="1">SPDS</shortName>
        <shortName evidence="1">SPDSY</shortName>
        <ecNumber evidence="1">2.5.1.16</ecNumber>
    </alternativeName>
</protein>
<keyword id="KW-0963">Cytoplasm</keyword>
<keyword id="KW-0620">Polyamine biosynthesis</keyword>
<keyword id="KW-0745">Spermidine biosynthesis</keyword>
<keyword id="KW-0808">Transferase</keyword>
<feature type="chain" id="PRO_1000197464" description="Polyamine aminopropyltransferase">
    <location>
        <begin position="1"/>
        <end position="275"/>
    </location>
</feature>
<feature type="domain" description="PABS" evidence="1">
    <location>
        <begin position="2"/>
        <end position="235"/>
    </location>
</feature>
<feature type="active site" description="Proton acceptor" evidence="1">
    <location>
        <position position="155"/>
    </location>
</feature>
<feature type="binding site" evidence="1">
    <location>
        <position position="31"/>
    </location>
    <ligand>
        <name>S-methyl-5'-thioadenosine</name>
        <dbReference type="ChEBI" id="CHEBI:17509"/>
    </ligand>
</feature>
<feature type="binding site" evidence="1">
    <location>
        <position position="62"/>
    </location>
    <ligand>
        <name>spermidine</name>
        <dbReference type="ChEBI" id="CHEBI:57834"/>
    </ligand>
</feature>
<feature type="binding site" evidence="1">
    <location>
        <position position="86"/>
    </location>
    <ligand>
        <name>spermidine</name>
        <dbReference type="ChEBI" id="CHEBI:57834"/>
    </ligand>
</feature>
<feature type="binding site" evidence="1">
    <location>
        <position position="106"/>
    </location>
    <ligand>
        <name>S-methyl-5'-thioadenosine</name>
        <dbReference type="ChEBI" id="CHEBI:17509"/>
    </ligand>
</feature>
<feature type="binding site" evidence="1">
    <location>
        <begin position="137"/>
        <end position="138"/>
    </location>
    <ligand>
        <name>S-methyl-5'-thioadenosine</name>
        <dbReference type="ChEBI" id="CHEBI:17509"/>
    </ligand>
</feature>
<feature type="binding site" evidence="1">
    <location>
        <begin position="155"/>
        <end position="158"/>
    </location>
    <ligand>
        <name>spermidine</name>
        <dbReference type="ChEBI" id="CHEBI:57834"/>
    </ligand>
</feature>
<feature type="binding site" evidence="1">
    <location>
        <position position="162"/>
    </location>
    <ligand>
        <name>S-methyl-5'-thioadenosine</name>
        <dbReference type="ChEBI" id="CHEBI:17509"/>
    </ligand>
</feature>
<reference key="1">
    <citation type="journal article" date="2008" name="Chem. Biol. Interact.">
        <title>Extending the Bacillus cereus group genomics to putative food-borne pathogens of different toxicity.</title>
        <authorList>
            <person name="Lapidus A."/>
            <person name="Goltsman E."/>
            <person name="Auger S."/>
            <person name="Galleron N."/>
            <person name="Segurens B."/>
            <person name="Dossat C."/>
            <person name="Land M.L."/>
            <person name="Broussolle V."/>
            <person name="Brillard J."/>
            <person name="Guinebretiere M.-H."/>
            <person name="Sanchis V."/>
            <person name="Nguen-the C."/>
            <person name="Lereclus D."/>
            <person name="Richardson P."/>
            <person name="Wincker P."/>
            <person name="Weissenbach J."/>
            <person name="Ehrlich S.D."/>
            <person name="Sorokin A."/>
        </authorList>
    </citation>
    <scope>NUCLEOTIDE SEQUENCE [LARGE SCALE GENOMIC DNA]</scope>
    <source>
        <strain>KBAB4</strain>
    </source>
</reference>
<dbReference type="EC" id="2.5.1.16" evidence="1"/>
<dbReference type="EMBL" id="CP000903">
    <property type="protein sequence ID" value="ABY46309.1"/>
    <property type="molecule type" value="Genomic_DNA"/>
</dbReference>
<dbReference type="RefSeq" id="WP_000424693.1">
    <property type="nucleotide sequence ID" value="NC_010184.1"/>
</dbReference>
<dbReference type="SMR" id="A9VSG3"/>
<dbReference type="GeneID" id="66265078"/>
<dbReference type="KEGG" id="bwe:BcerKBAB4_5164"/>
<dbReference type="eggNOG" id="COG0421">
    <property type="taxonomic scope" value="Bacteria"/>
</dbReference>
<dbReference type="HOGENOM" id="CLU_048199_0_0_9"/>
<dbReference type="UniPathway" id="UPA00248">
    <property type="reaction ID" value="UER00314"/>
</dbReference>
<dbReference type="Proteomes" id="UP000002154">
    <property type="component" value="Chromosome"/>
</dbReference>
<dbReference type="GO" id="GO:0005829">
    <property type="term" value="C:cytosol"/>
    <property type="evidence" value="ECO:0007669"/>
    <property type="project" value="TreeGrafter"/>
</dbReference>
<dbReference type="GO" id="GO:0004766">
    <property type="term" value="F:spermidine synthase activity"/>
    <property type="evidence" value="ECO:0007669"/>
    <property type="project" value="UniProtKB-UniRule"/>
</dbReference>
<dbReference type="GO" id="GO:0008295">
    <property type="term" value="P:spermidine biosynthetic process"/>
    <property type="evidence" value="ECO:0007669"/>
    <property type="project" value="UniProtKB-UniRule"/>
</dbReference>
<dbReference type="CDD" id="cd02440">
    <property type="entry name" value="AdoMet_MTases"/>
    <property type="match status" value="1"/>
</dbReference>
<dbReference type="FunFam" id="2.30.140.10:FF:000004">
    <property type="entry name" value="Polyamine aminopropyltransferase"/>
    <property type="match status" value="1"/>
</dbReference>
<dbReference type="FunFam" id="3.40.50.150:FF:000056">
    <property type="entry name" value="Polyamine aminopropyltransferase"/>
    <property type="match status" value="1"/>
</dbReference>
<dbReference type="Gene3D" id="2.30.140.10">
    <property type="entry name" value="Spermidine synthase, tetramerisation domain"/>
    <property type="match status" value="1"/>
</dbReference>
<dbReference type="Gene3D" id="3.40.50.150">
    <property type="entry name" value="Vaccinia Virus protein VP39"/>
    <property type="match status" value="1"/>
</dbReference>
<dbReference type="HAMAP" id="MF_00198">
    <property type="entry name" value="Spermidine_synth"/>
    <property type="match status" value="1"/>
</dbReference>
<dbReference type="InterPro" id="IPR030374">
    <property type="entry name" value="PABS"/>
</dbReference>
<dbReference type="InterPro" id="IPR030373">
    <property type="entry name" value="PABS_CS"/>
</dbReference>
<dbReference type="InterPro" id="IPR029063">
    <property type="entry name" value="SAM-dependent_MTases_sf"/>
</dbReference>
<dbReference type="InterPro" id="IPR001045">
    <property type="entry name" value="Spermi_synthase"/>
</dbReference>
<dbReference type="InterPro" id="IPR035246">
    <property type="entry name" value="Spermidine_synt_N"/>
</dbReference>
<dbReference type="InterPro" id="IPR037163">
    <property type="entry name" value="Spermidine_synt_N_sf"/>
</dbReference>
<dbReference type="NCBIfam" id="NF037959">
    <property type="entry name" value="MFS_SpdSyn"/>
    <property type="match status" value="1"/>
</dbReference>
<dbReference type="NCBIfam" id="NF002010">
    <property type="entry name" value="PRK00811.1"/>
    <property type="match status" value="1"/>
</dbReference>
<dbReference type="NCBIfam" id="TIGR00417">
    <property type="entry name" value="speE"/>
    <property type="match status" value="1"/>
</dbReference>
<dbReference type="PANTHER" id="PTHR11558:SF11">
    <property type="entry name" value="SPERMIDINE SYNTHASE"/>
    <property type="match status" value="1"/>
</dbReference>
<dbReference type="PANTHER" id="PTHR11558">
    <property type="entry name" value="SPERMIDINE/SPERMINE SYNTHASE"/>
    <property type="match status" value="1"/>
</dbReference>
<dbReference type="Pfam" id="PF17284">
    <property type="entry name" value="Spermine_synt_N"/>
    <property type="match status" value="1"/>
</dbReference>
<dbReference type="Pfam" id="PF01564">
    <property type="entry name" value="Spermine_synth"/>
    <property type="match status" value="1"/>
</dbReference>
<dbReference type="SUPFAM" id="SSF53335">
    <property type="entry name" value="S-adenosyl-L-methionine-dependent methyltransferases"/>
    <property type="match status" value="1"/>
</dbReference>
<dbReference type="PROSITE" id="PS01330">
    <property type="entry name" value="PABS_1"/>
    <property type="match status" value="1"/>
</dbReference>
<dbReference type="PROSITE" id="PS51006">
    <property type="entry name" value="PABS_2"/>
    <property type="match status" value="1"/>
</dbReference>